<name>CAF17_PICST</name>
<gene>
    <name type="primary">CAF17</name>
    <name type="ORF">PICST_40677</name>
</gene>
<reference key="1">
    <citation type="journal article" date="2007" name="Nat. Biotechnol.">
        <title>Genome sequence of the lignocellulose-bioconverting and xylose-fermenting yeast Pichia stipitis.</title>
        <authorList>
            <person name="Jeffries T.W."/>
            <person name="Grigoriev I.V."/>
            <person name="Grimwood J."/>
            <person name="Laplaza J.M."/>
            <person name="Aerts A."/>
            <person name="Salamov A."/>
            <person name="Schmutz J."/>
            <person name="Lindquist E."/>
            <person name="Dehal P."/>
            <person name="Shapiro H."/>
            <person name="Jin Y.-S."/>
            <person name="Passoth V."/>
            <person name="Richardson P.M."/>
        </authorList>
    </citation>
    <scope>NUCLEOTIDE SEQUENCE [LARGE SCALE GENOMIC DNA]</scope>
    <source>
        <strain>ATCC 58785 / CBS 6054 / NBRC 10063 / NRRL Y-11545</strain>
    </source>
</reference>
<accession>A3LNW4</accession>
<dbReference type="EMBL" id="CP000496">
    <property type="protein sequence ID" value="ABN64937.2"/>
    <property type="molecule type" value="Genomic_DNA"/>
</dbReference>
<dbReference type="RefSeq" id="XP_001382966.2">
    <property type="nucleotide sequence ID" value="XM_001382929.1"/>
</dbReference>
<dbReference type="SMR" id="A3LNW4"/>
<dbReference type="FunCoup" id="A3LNW4">
    <property type="interactions" value="309"/>
</dbReference>
<dbReference type="STRING" id="322104.A3LNW4"/>
<dbReference type="GeneID" id="4837601"/>
<dbReference type="KEGG" id="pic:PICST_40677"/>
<dbReference type="eggNOG" id="KOG2929">
    <property type="taxonomic scope" value="Eukaryota"/>
</dbReference>
<dbReference type="HOGENOM" id="CLU_007884_7_3_1"/>
<dbReference type="InParanoid" id="A3LNW4"/>
<dbReference type="OMA" id="PFECNLD"/>
<dbReference type="OrthoDB" id="191995at2759"/>
<dbReference type="Proteomes" id="UP000002258">
    <property type="component" value="Chromosome 2"/>
</dbReference>
<dbReference type="GO" id="GO:0005759">
    <property type="term" value="C:mitochondrial matrix"/>
    <property type="evidence" value="ECO:0007669"/>
    <property type="project" value="TreeGrafter"/>
</dbReference>
<dbReference type="GO" id="GO:0016740">
    <property type="term" value="F:transferase activity"/>
    <property type="evidence" value="ECO:0007669"/>
    <property type="project" value="UniProtKB-KW"/>
</dbReference>
<dbReference type="GO" id="GO:0016226">
    <property type="term" value="P:iron-sulfur cluster assembly"/>
    <property type="evidence" value="ECO:0007669"/>
    <property type="project" value="TreeGrafter"/>
</dbReference>
<dbReference type="Gene3D" id="2.40.30.160">
    <property type="match status" value="1"/>
</dbReference>
<dbReference type="Gene3D" id="3.30.1360.120">
    <property type="entry name" value="Probable tRNA modification gtpase trme, domain 1"/>
    <property type="match status" value="1"/>
</dbReference>
<dbReference type="InterPro" id="IPR027266">
    <property type="entry name" value="TrmE/GcvT_dom1"/>
</dbReference>
<dbReference type="InterPro" id="IPR045179">
    <property type="entry name" value="YgfZ/GcvT"/>
</dbReference>
<dbReference type="InterPro" id="IPR017703">
    <property type="entry name" value="YgfZ/GcvT_CS"/>
</dbReference>
<dbReference type="NCBIfam" id="TIGR03317">
    <property type="entry name" value="ygfZ_signature"/>
    <property type="match status" value="1"/>
</dbReference>
<dbReference type="PANTHER" id="PTHR22602">
    <property type="entry name" value="TRANSFERASE CAF17, MITOCHONDRIAL-RELATED"/>
    <property type="match status" value="1"/>
</dbReference>
<dbReference type="PANTHER" id="PTHR22602:SF0">
    <property type="entry name" value="TRANSFERASE CAF17, MITOCHONDRIAL-RELATED"/>
    <property type="match status" value="1"/>
</dbReference>
<dbReference type="SUPFAM" id="SSF103025">
    <property type="entry name" value="Folate-binding domain"/>
    <property type="match status" value="1"/>
</dbReference>
<feature type="transit peptide" description="Mitochondrion" evidence="2">
    <location>
        <begin position="1"/>
        <end position="43"/>
    </location>
</feature>
<feature type="chain" id="PRO_0000301707" description="Iron-sulfur cluster assembly factor IBA57 homolog, mitochondrial">
    <location>
        <begin position="44"/>
        <end position="469"/>
    </location>
</feature>
<feature type="region of interest" description="Disordered" evidence="3">
    <location>
        <begin position="387"/>
        <end position="415"/>
    </location>
</feature>
<feature type="compositionally biased region" description="Low complexity" evidence="3">
    <location>
        <begin position="390"/>
        <end position="401"/>
    </location>
</feature>
<organism>
    <name type="scientific">Scheffersomyces stipitis (strain ATCC 58785 / CBS 6054 / NBRC 10063 / NRRL Y-11545)</name>
    <name type="common">Yeast</name>
    <name type="synonym">Pichia stipitis</name>
    <dbReference type="NCBI Taxonomy" id="322104"/>
    <lineage>
        <taxon>Eukaryota</taxon>
        <taxon>Fungi</taxon>
        <taxon>Dikarya</taxon>
        <taxon>Ascomycota</taxon>
        <taxon>Saccharomycotina</taxon>
        <taxon>Pichiomycetes</taxon>
        <taxon>Debaryomycetaceae</taxon>
        <taxon>Scheffersomyces</taxon>
    </lineage>
</organism>
<comment type="subcellular location">
    <subcellularLocation>
        <location evidence="1">Mitochondrion matrix</location>
    </subcellularLocation>
</comment>
<comment type="similarity">
    <text evidence="4">Belongs to the GcvT family. CAF17/IBA57 subfamily.</text>
</comment>
<protein>
    <recommendedName>
        <fullName>Iron-sulfur cluster assembly factor IBA57 homolog, mitochondrial</fullName>
    </recommendedName>
</protein>
<evidence type="ECO:0000250" key="1">
    <source>
        <dbReference type="UniProtKB" id="P47158"/>
    </source>
</evidence>
<evidence type="ECO:0000255" key="2"/>
<evidence type="ECO:0000256" key="3">
    <source>
        <dbReference type="SAM" id="MobiDB-lite"/>
    </source>
</evidence>
<evidence type="ECO:0000305" key="4"/>
<keyword id="KW-0496">Mitochondrion</keyword>
<keyword id="KW-1185">Reference proteome</keyword>
<keyword id="KW-0809">Transit peptide</keyword>
<proteinExistence type="inferred from homology"/>
<sequence length="469" mass="53167">MSLPIAGLAQLSKGIIQVVGKDATKFLNGLITSRMLPNVVKKKQHTISENENRHANLSEIIDINNNWGLMHGDIYDPEENIFIGRDGLNSMFLNSKGRVTADCFLYSFPFHNSKGSFEEVLKKPNFLIEVDSRIIPEMESLLRIHKLSAKVKINTVSDIYSYYYYSDTMEFDELLEQVQDTYFRSVDPNEALVKANEFIESNLIFNSRVSSNIVGFSIDNRIPNLGIKILTNKPLNNDDQNIGVAVDDFFSESFQQSFRTNIISEDVINMRRNVNGLFEGQDADIDQTLLPFECNLDYTNGLSLDKGCYVGQELTIRTYNNGVIRKRIMPVQFFENNEETVDEISNQGYVNIDSSDKVVETLKMLNQTTLGKLDMLPLYDLPVENEESKSASPFASSPFGGESKKSRRRKASSGKIISQHDNVGFALVTLSEIERNDLFKIEVPSLEGGMRSVGIKVFTPDWWPEQEDY</sequence>